<accession>Q1HK43</accession>
<comment type="function">
    <text evidence="1">Core subunit of the mitochondrial membrane respiratory chain NADH dehydrogenase (Complex I) which catalyzes electron transfer from NADH through the respiratory chain, using ubiquinone as an electron acceptor. Part of the enzyme membrane arm which is embedded in the lipid bilayer and involved in proton translocation.</text>
</comment>
<comment type="catalytic activity">
    <reaction evidence="1">
        <text>a ubiquinone + NADH + 5 H(+)(in) = a ubiquinol + NAD(+) + 4 H(+)(out)</text>
        <dbReference type="Rhea" id="RHEA:29091"/>
        <dbReference type="Rhea" id="RHEA-COMP:9565"/>
        <dbReference type="Rhea" id="RHEA-COMP:9566"/>
        <dbReference type="ChEBI" id="CHEBI:15378"/>
        <dbReference type="ChEBI" id="CHEBI:16389"/>
        <dbReference type="ChEBI" id="CHEBI:17976"/>
        <dbReference type="ChEBI" id="CHEBI:57540"/>
        <dbReference type="ChEBI" id="CHEBI:57945"/>
        <dbReference type="EC" id="7.1.1.2"/>
    </reaction>
    <physiologicalReaction direction="left-to-right" evidence="1">
        <dbReference type="Rhea" id="RHEA:29092"/>
    </physiologicalReaction>
</comment>
<comment type="subunit">
    <text evidence="2">Core subunit of respiratory chain NADH dehydrogenase (Complex I) which is composed of 45 different subunits.</text>
</comment>
<comment type="subcellular location">
    <subcellularLocation>
        <location evidence="2">Mitochondrion inner membrane</location>
        <topology evidence="3">Multi-pass membrane protein</topology>
    </subcellularLocation>
</comment>
<comment type="similarity">
    <text evidence="4">Belongs to the complex I subunit 4L family.</text>
</comment>
<geneLocation type="mitochondrion"/>
<dbReference type="EC" id="7.1.1.2"/>
<dbReference type="EMBL" id="DQ480509">
    <property type="protein sequence ID" value="ABE48241.1"/>
    <property type="molecule type" value="Genomic_DNA"/>
</dbReference>
<dbReference type="EMBL" id="DQ480510">
    <property type="protein sequence ID" value="ABE48254.1"/>
    <property type="molecule type" value="Genomic_DNA"/>
</dbReference>
<dbReference type="EMBL" id="DQ480511">
    <property type="protein sequence ID" value="ABE48267.1"/>
    <property type="molecule type" value="Genomic_DNA"/>
</dbReference>
<dbReference type="RefSeq" id="YP_626723.1">
    <property type="nucleotide sequence ID" value="NC_008093.1"/>
</dbReference>
<dbReference type="SMR" id="Q1HK43"/>
<dbReference type="GeneID" id="4097786"/>
<dbReference type="CTD" id="4539"/>
<dbReference type="GO" id="GO:0005743">
    <property type="term" value="C:mitochondrial inner membrane"/>
    <property type="evidence" value="ECO:0000250"/>
    <property type="project" value="UniProtKB"/>
</dbReference>
<dbReference type="GO" id="GO:0045271">
    <property type="term" value="C:respiratory chain complex I"/>
    <property type="evidence" value="ECO:0000250"/>
    <property type="project" value="UniProtKB"/>
</dbReference>
<dbReference type="GO" id="GO:0008137">
    <property type="term" value="F:NADH dehydrogenase (ubiquinone) activity"/>
    <property type="evidence" value="ECO:0000250"/>
    <property type="project" value="UniProtKB"/>
</dbReference>
<dbReference type="GO" id="GO:0042773">
    <property type="term" value="P:ATP synthesis coupled electron transport"/>
    <property type="evidence" value="ECO:0007669"/>
    <property type="project" value="InterPro"/>
</dbReference>
<dbReference type="FunFam" id="1.10.287.3510:FF:000002">
    <property type="entry name" value="NADH-ubiquinone oxidoreductase chain 4L"/>
    <property type="match status" value="1"/>
</dbReference>
<dbReference type="Gene3D" id="1.10.287.3510">
    <property type="match status" value="1"/>
</dbReference>
<dbReference type="InterPro" id="IPR001133">
    <property type="entry name" value="NADH_UbQ_OxRdtase_chain4L/K"/>
</dbReference>
<dbReference type="InterPro" id="IPR039428">
    <property type="entry name" value="NUOK/Mnh_C1-like"/>
</dbReference>
<dbReference type="PANTHER" id="PTHR11434:SF0">
    <property type="entry name" value="NADH-UBIQUINONE OXIDOREDUCTASE CHAIN 4L"/>
    <property type="match status" value="1"/>
</dbReference>
<dbReference type="PANTHER" id="PTHR11434">
    <property type="entry name" value="NADH-UBIQUINONE OXIDOREDUCTASE SUBUNIT ND4L"/>
    <property type="match status" value="1"/>
</dbReference>
<dbReference type="Pfam" id="PF00420">
    <property type="entry name" value="Oxidored_q2"/>
    <property type="match status" value="1"/>
</dbReference>
<gene>
    <name type="primary">MT-ND4L</name>
    <name type="synonym">MTND4L</name>
    <name type="synonym">NADH4L</name>
    <name type="synonym">ND4L</name>
</gene>
<protein>
    <recommendedName>
        <fullName>NADH-ubiquinone oxidoreductase chain 4L</fullName>
        <ecNumber>7.1.1.2</ecNumber>
    </recommendedName>
    <alternativeName>
        <fullName>NADH dehydrogenase subunit 4L</fullName>
    </alternativeName>
</protein>
<reference key="1">
    <citation type="journal article" date="2006" name="Genome Res.">
        <title>Relaxation of selective constraint on dog mitochondrial DNA following domestication.</title>
        <authorList>
            <person name="Bjornerfeldt S."/>
            <person name="Webster M.T."/>
            <person name="Vila C."/>
        </authorList>
    </citation>
    <scope>NUCLEOTIDE SEQUENCE [GENOMIC DNA]</scope>
    <source>
        <strain>Isolate Colorado 1</strain>
        <strain>Isolate Colorado 2</strain>
        <strain>Isolate Nebraska 1</strain>
    </source>
</reference>
<feature type="chain" id="PRO_0000274985" description="NADH-ubiquinone oxidoreductase chain 4L">
    <location>
        <begin position="1"/>
        <end position="98"/>
    </location>
</feature>
<feature type="transmembrane region" description="Helical" evidence="3">
    <location>
        <begin position="1"/>
        <end position="21"/>
    </location>
</feature>
<feature type="transmembrane region" description="Helical" evidence="3">
    <location>
        <begin position="29"/>
        <end position="49"/>
    </location>
</feature>
<feature type="transmembrane region" description="Helical" evidence="3">
    <location>
        <begin position="61"/>
        <end position="81"/>
    </location>
</feature>
<organism>
    <name type="scientific">Canis latrans</name>
    <name type="common">Coyote</name>
    <dbReference type="NCBI Taxonomy" id="9614"/>
    <lineage>
        <taxon>Eukaryota</taxon>
        <taxon>Metazoa</taxon>
        <taxon>Chordata</taxon>
        <taxon>Craniata</taxon>
        <taxon>Vertebrata</taxon>
        <taxon>Euteleostomi</taxon>
        <taxon>Mammalia</taxon>
        <taxon>Eutheria</taxon>
        <taxon>Laurasiatheria</taxon>
        <taxon>Carnivora</taxon>
        <taxon>Caniformia</taxon>
        <taxon>Canidae</taxon>
        <taxon>Canis</taxon>
    </lineage>
</organism>
<evidence type="ECO:0000250" key="1">
    <source>
        <dbReference type="UniProtKB" id="P03901"/>
    </source>
</evidence>
<evidence type="ECO:0000250" key="2">
    <source>
        <dbReference type="UniProtKB" id="P03902"/>
    </source>
</evidence>
<evidence type="ECO:0000255" key="3"/>
<evidence type="ECO:0000305" key="4"/>
<name>NU4LM_CANLA</name>
<proteinExistence type="inferred from homology"/>
<keyword id="KW-0249">Electron transport</keyword>
<keyword id="KW-0472">Membrane</keyword>
<keyword id="KW-0496">Mitochondrion</keyword>
<keyword id="KW-0999">Mitochondrion inner membrane</keyword>
<keyword id="KW-0520">NAD</keyword>
<keyword id="KW-0679">Respiratory chain</keyword>
<keyword id="KW-1278">Translocase</keyword>
<keyword id="KW-0812">Transmembrane</keyword>
<keyword id="KW-1133">Transmembrane helix</keyword>
<keyword id="KW-0813">Transport</keyword>
<keyword id="KW-0830">Ubiquinone</keyword>
<sequence length="98" mass="10862">MSMVYINIFLAFILSLMGMLVYRSHLMSSLLCLEGMMLSLFVMMSVTILNNHLTLASMMPIVLLVFAACEAALGLSLLVMVSNTYGTDYVQNLNLLQC</sequence>